<proteinExistence type="inferred from homology"/>
<dbReference type="EC" id="2.7.1.23" evidence="1"/>
<dbReference type="EMBL" id="CP001581">
    <property type="protein sequence ID" value="ACO83423.1"/>
    <property type="molecule type" value="Genomic_DNA"/>
</dbReference>
<dbReference type="RefSeq" id="WP_003358862.1">
    <property type="nucleotide sequence ID" value="NC_012563.1"/>
</dbReference>
<dbReference type="SMR" id="C1FPA6"/>
<dbReference type="KEGG" id="cby:CLM_2096"/>
<dbReference type="eggNOG" id="COG0061">
    <property type="taxonomic scope" value="Bacteria"/>
</dbReference>
<dbReference type="HOGENOM" id="CLU_008831_0_1_9"/>
<dbReference type="Proteomes" id="UP000001374">
    <property type="component" value="Chromosome"/>
</dbReference>
<dbReference type="GO" id="GO:0005737">
    <property type="term" value="C:cytoplasm"/>
    <property type="evidence" value="ECO:0007669"/>
    <property type="project" value="UniProtKB-SubCell"/>
</dbReference>
<dbReference type="GO" id="GO:0005524">
    <property type="term" value="F:ATP binding"/>
    <property type="evidence" value="ECO:0007669"/>
    <property type="project" value="UniProtKB-KW"/>
</dbReference>
<dbReference type="GO" id="GO:0046872">
    <property type="term" value="F:metal ion binding"/>
    <property type="evidence" value="ECO:0007669"/>
    <property type="project" value="UniProtKB-UniRule"/>
</dbReference>
<dbReference type="GO" id="GO:0051287">
    <property type="term" value="F:NAD binding"/>
    <property type="evidence" value="ECO:0007669"/>
    <property type="project" value="UniProtKB-ARBA"/>
</dbReference>
<dbReference type="GO" id="GO:0003951">
    <property type="term" value="F:NAD+ kinase activity"/>
    <property type="evidence" value="ECO:0007669"/>
    <property type="project" value="UniProtKB-UniRule"/>
</dbReference>
<dbReference type="GO" id="GO:0019674">
    <property type="term" value="P:NAD metabolic process"/>
    <property type="evidence" value="ECO:0007669"/>
    <property type="project" value="InterPro"/>
</dbReference>
<dbReference type="GO" id="GO:0006741">
    <property type="term" value="P:NADP biosynthetic process"/>
    <property type="evidence" value="ECO:0007669"/>
    <property type="project" value="UniProtKB-UniRule"/>
</dbReference>
<dbReference type="FunFam" id="2.60.200.30:FF:000011">
    <property type="entry name" value="NAD kinase"/>
    <property type="match status" value="1"/>
</dbReference>
<dbReference type="Gene3D" id="3.40.50.10330">
    <property type="entry name" value="Probable inorganic polyphosphate/atp-NAD kinase, domain 1"/>
    <property type="match status" value="1"/>
</dbReference>
<dbReference type="Gene3D" id="2.60.200.30">
    <property type="entry name" value="Probable inorganic polyphosphate/atp-NAD kinase, domain 2"/>
    <property type="match status" value="1"/>
</dbReference>
<dbReference type="HAMAP" id="MF_00361">
    <property type="entry name" value="NAD_kinase"/>
    <property type="match status" value="1"/>
</dbReference>
<dbReference type="InterPro" id="IPR017438">
    <property type="entry name" value="ATP-NAD_kinase_N"/>
</dbReference>
<dbReference type="InterPro" id="IPR017437">
    <property type="entry name" value="ATP-NAD_kinase_PpnK-typ_C"/>
</dbReference>
<dbReference type="InterPro" id="IPR016064">
    <property type="entry name" value="NAD/diacylglycerol_kinase_sf"/>
</dbReference>
<dbReference type="InterPro" id="IPR002504">
    <property type="entry name" value="NADK"/>
</dbReference>
<dbReference type="PANTHER" id="PTHR20275">
    <property type="entry name" value="NAD KINASE"/>
    <property type="match status" value="1"/>
</dbReference>
<dbReference type="PANTHER" id="PTHR20275:SF0">
    <property type="entry name" value="NAD KINASE"/>
    <property type="match status" value="1"/>
</dbReference>
<dbReference type="Pfam" id="PF01513">
    <property type="entry name" value="NAD_kinase"/>
    <property type="match status" value="1"/>
</dbReference>
<dbReference type="Pfam" id="PF20143">
    <property type="entry name" value="NAD_kinase_C"/>
    <property type="match status" value="1"/>
</dbReference>
<dbReference type="SUPFAM" id="SSF111331">
    <property type="entry name" value="NAD kinase/diacylglycerol kinase-like"/>
    <property type="match status" value="1"/>
</dbReference>
<comment type="function">
    <text evidence="1">Involved in the regulation of the intracellular balance of NAD and NADP, and is a key enzyme in the biosynthesis of NADP. Catalyzes specifically the phosphorylation on 2'-hydroxyl of the adenosine moiety of NAD to yield NADP.</text>
</comment>
<comment type="catalytic activity">
    <reaction evidence="1">
        <text>NAD(+) + ATP = ADP + NADP(+) + H(+)</text>
        <dbReference type="Rhea" id="RHEA:18629"/>
        <dbReference type="ChEBI" id="CHEBI:15378"/>
        <dbReference type="ChEBI" id="CHEBI:30616"/>
        <dbReference type="ChEBI" id="CHEBI:57540"/>
        <dbReference type="ChEBI" id="CHEBI:58349"/>
        <dbReference type="ChEBI" id="CHEBI:456216"/>
        <dbReference type="EC" id="2.7.1.23"/>
    </reaction>
</comment>
<comment type="cofactor">
    <cofactor evidence="1">
        <name>a divalent metal cation</name>
        <dbReference type="ChEBI" id="CHEBI:60240"/>
    </cofactor>
</comment>
<comment type="subcellular location">
    <subcellularLocation>
        <location evidence="1">Cytoplasm</location>
    </subcellularLocation>
</comment>
<comment type="similarity">
    <text evidence="1">Belongs to the NAD kinase family.</text>
</comment>
<evidence type="ECO:0000255" key="1">
    <source>
        <dbReference type="HAMAP-Rule" id="MF_00361"/>
    </source>
</evidence>
<gene>
    <name evidence="1" type="primary">nadK</name>
    <name type="ordered locus">CLM_2096</name>
</gene>
<accession>C1FPA6</accession>
<name>NADK_CLOBJ</name>
<feature type="chain" id="PRO_1000133564" description="NAD kinase">
    <location>
        <begin position="1"/>
        <end position="281"/>
    </location>
</feature>
<feature type="active site" description="Proton acceptor" evidence="1">
    <location>
        <position position="61"/>
    </location>
</feature>
<feature type="binding site" evidence="1">
    <location>
        <begin position="61"/>
        <end position="62"/>
    </location>
    <ligand>
        <name>NAD(+)</name>
        <dbReference type="ChEBI" id="CHEBI:57540"/>
    </ligand>
</feature>
<feature type="binding site" evidence="1">
    <location>
        <begin position="134"/>
        <end position="135"/>
    </location>
    <ligand>
        <name>NAD(+)</name>
        <dbReference type="ChEBI" id="CHEBI:57540"/>
    </ligand>
</feature>
<feature type="binding site" evidence="1">
    <location>
        <position position="145"/>
    </location>
    <ligand>
        <name>NAD(+)</name>
        <dbReference type="ChEBI" id="CHEBI:57540"/>
    </ligand>
</feature>
<feature type="binding site" evidence="1">
    <location>
        <position position="164"/>
    </location>
    <ligand>
        <name>NAD(+)</name>
        <dbReference type="ChEBI" id="CHEBI:57540"/>
    </ligand>
</feature>
<feature type="binding site" evidence="1">
    <location>
        <begin position="175"/>
        <end position="180"/>
    </location>
    <ligand>
        <name>NAD(+)</name>
        <dbReference type="ChEBI" id="CHEBI:57540"/>
    </ligand>
</feature>
<feature type="binding site" evidence="1">
    <location>
        <position position="234"/>
    </location>
    <ligand>
        <name>NAD(+)</name>
        <dbReference type="ChEBI" id="CHEBI:57540"/>
    </ligand>
</feature>
<reference key="1">
    <citation type="submission" date="2008-10" db="EMBL/GenBank/DDBJ databases">
        <title>Genome sequence of Clostridium botulinum A2 Kyoto.</title>
        <authorList>
            <person name="Shrivastava S."/>
            <person name="Brinkac L.M."/>
            <person name="Brown J.L."/>
            <person name="Bruce D."/>
            <person name="Detter C.C."/>
            <person name="Johnson E.A."/>
            <person name="Munk C.A."/>
            <person name="Smith L.A."/>
            <person name="Smith T.J."/>
            <person name="Sutton G."/>
            <person name="Brettin T.S."/>
        </authorList>
    </citation>
    <scope>NUCLEOTIDE SEQUENCE [LARGE SCALE GENOMIC DNA]</scope>
    <source>
        <strain>Kyoto / Type A2</strain>
    </source>
</reference>
<sequence>MKNIGININTDKDISRNILDKIFQYIHEECSEAKIKVFYDSKGLDNEESRALDAVMVLGGDGTILGTARALAKYDVPIFGINRGHLGFLAEIELEDCKEAIKNLFKGQYKIEDRIMLKCDLKGIDKKDDFLALNDIVLTKGNLSRIVKYSIYVDDVWYTTFVADGVIVATPTGSTAYSLSAGGPIVYPDLDVLEIAPICPHSLGIRPILLNGNSKINIRVLKKYEDPVLTIDGQRYKKVTVNEVTISKSKYKCRLIKFKDKDYFKILRTKISYRSRECEGE</sequence>
<protein>
    <recommendedName>
        <fullName evidence="1">NAD kinase</fullName>
        <ecNumber evidence="1">2.7.1.23</ecNumber>
    </recommendedName>
    <alternativeName>
        <fullName evidence="1">ATP-dependent NAD kinase</fullName>
    </alternativeName>
</protein>
<keyword id="KW-0067">ATP-binding</keyword>
<keyword id="KW-0963">Cytoplasm</keyword>
<keyword id="KW-0418">Kinase</keyword>
<keyword id="KW-0520">NAD</keyword>
<keyword id="KW-0521">NADP</keyword>
<keyword id="KW-0547">Nucleotide-binding</keyword>
<keyword id="KW-0808">Transferase</keyword>
<organism>
    <name type="scientific">Clostridium botulinum (strain Kyoto / Type A2)</name>
    <dbReference type="NCBI Taxonomy" id="536232"/>
    <lineage>
        <taxon>Bacteria</taxon>
        <taxon>Bacillati</taxon>
        <taxon>Bacillota</taxon>
        <taxon>Clostridia</taxon>
        <taxon>Eubacteriales</taxon>
        <taxon>Clostridiaceae</taxon>
        <taxon>Clostridium</taxon>
    </lineage>
</organism>